<gene>
    <name evidence="1" type="primary">panB</name>
    <name type="ordered locus">NGO_0436</name>
</gene>
<evidence type="ECO:0000255" key="1">
    <source>
        <dbReference type="HAMAP-Rule" id="MF_00156"/>
    </source>
</evidence>
<feature type="chain" id="PRO_0000297305" description="3-methyl-2-oxobutanoate hydroxymethyltransferase">
    <location>
        <begin position="1"/>
        <end position="263"/>
    </location>
</feature>
<feature type="active site" description="Proton acceptor" evidence="1">
    <location>
        <position position="179"/>
    </location>
</feature>
<feature type="binding site" evidence="1">
    <location>
        <begin position="43"/>
        <end position="44"/>
    </location>
    <ligand>
        <name>3-methyl-2-oxobutanoate</name>
        <dbReference type="ChEBI" id="CHEBI:11851"/>
    </ligand>
</feature>
<feature type="binding site" evidence="1">
    <location>
        <position position="43"/>
    </location>
    <ligand>
        <name>Mg(2+)</name>
        <dbReference type="ChEBI" id="CHEBI:18420"/>
    </ligand>
</feature>
<feature type="binding site" evidence="1">
    <location>
        <position position="82"/>
    </location>
    <ligand>
        <name>3-methyl-2-oxobutanoate</name>
        <dbReference type="ChEBI" id="CHEBI:11851"/>
    </ligand>
</feature>
<feature type="binding site" evidence="1">
    <location>
        <position position="82"/>
    </location>
    <ligand>
        <name>Mg(2+)</name>
        <dbReference type="ChEBI" id="CHEBI:18420"/>
    </ligand>
</feature>
<feature type="binding site" evidence="1">
    <location>
        <position position="111"/>
    </location>
    <ligand>
        <name>3-methyl-2-oxobutanoate</name>
        <dbReference type="ChEBI" id="CHEBI:11851"/>
    </ligand>
</feature>
<feature type="binding site" evidence="1">
    <location>
        <position position="113"/>
    </location>
    <ligand>
        <name>Mg(2+)</name>
        <dbReference type="ChEBI" id="CHEBI:18420"/>
    </ligand>
</feature>
<name>PANB_NEIG1</name>
<dbReference type="EC" id="2.1.2.11" evidence="1"/>
<dbReference type="EMBL" id="AE004969">
    <property type="protein sequence ID" value="AAW89178.1"/>
    <property type="molecule type" value="Genomic_DNA"/>
</dbReference>
<dbReference type="RefSeq" id="WP_003687894.1">
    <property type="nucleotide sequence ID" value="NC_002946.2"/>
</dbReference>
<dbReference type="RefSeq" id="YP_207590.1">
    <property type="nucleotide sequence ID" value="NC_002946.2"/>
</dbReference>
<dbReference type="SMR" id="Q5F9F9"/>
<dbReference type="STRING" id="242231.NGO_0436"/>
<dbReference type="GeneID" id="66752776"/>
<dbReference type="KEGG" id="ngo:NGO_0436"/>
<dbReference type="PATRIC" id="fig|242231.10.peg.521"/>
<dbReference type="HOGENOM" id="CLU_036645_1_0_4"/>
<dbReference type="UniPathway" id="UPA00028">
    <property type="reaction ID" value="UER00003"/>
</dbReference>
<dbReference type="Proteomes" id="UP000000535">
    <property type="component" value="Chromosome"/>
</dbReference>
<dbReference type="GO" id="GO:0005737">
    <property type="term" value="C:cytoplasm"/>
    <property type="evidence" value="ECO:0007669"/>
    <property type="project" value="UniProtKB-SubCell"/>
</dbReference>
<dbReference type="GO" id="GO:0003864">
    <property type="term" value="F:3-methyl-2-oxobutanoate hydroxymethyltransferase activity"/>
    <property type="evidence" value="ECO:0007669"/>
    <property type="project" value="UniProtKB-UniRule"/>
</dbReference>
<dbReference type="GO" id="GO:0000287">
    <property type="term" value="F:magnesium ion binding"/>
    <property type="evidence" value="ECO:0007669"/>
    <property type="project" value="TreeGrafter"/>
</dbReference>
<dbReference type="GO" id="GO:0071281">
    <property type="term" value="P:cellular response to iron ion"/>
    <property type="evidence" value="ECO:0000269"/>
    <property type="project" value="CollecTF"/>
</dbReference>
<dbReference type="GO" id="GO:0015940">
    <property type="term" value="P:pantothenate biosynthetic process"/>
    <property type="evidence" value="ECO:0007669"/>
    <property type="project" value="UniProtKB-UniRule"/>
</dbReference>
<dbReference type="CDD" id="cd06557">
    <property type="entry name" value="KPHMT-like"/>
    <property type="match status" value="1"/>
</dbReference>
<dbReference type="FunFam" id="3.20.20.60:FF:000037">
    <property type="entry name" value="3-methyl-2-oxobutanoate hydroxymethyltransferase"/>
    <property type="match status" value="1"/>
</dbReference>
<dbReference type="Gene3D" id="3.20.20.60">
    <property type="entry name" value="Phosphoenolpyruvate-binding domains"/>
    <property type="match status" value="1"/>
</dbReference>
<dbReference type="HAMAP" id="MF_00156">
    <property type="entry name" value="PanB"/>
    <property type="match status" value="1"/>
</dbReference>
<dbReference type="InterPro" id="IPR003700">
    <property type="entry name" value="Pantoate_hydroxy_MeTrfase"/>
</dbReference>
<dbReference type="InterPro" id="IPR015813">
    <property type="entry name" value="Pyrv/PenolPyrv_kinase-like_dom"/>
</dbReference>
<dbReference type="InterPro" id="IPR040442">
    <property type="entry name" value="Pyrv_kinase-like_dom_sf"/>
</dbReference>
<dbReference type="NCBIfam" id="TIGR00222">
    <property type="entry name" value="panB"/>
    <property type="match status" value="1"/>
</dbReference>
<dbReference type="NCBIfam" id="NF001452">
    <property type="entry name" value="PRK00311.1"/>
    <property type="match status" value="1"/>
</dbReference>
<dbReference type="PANTHER" id="PTHR20881">
    <property type="entry name" value="3-METHYL-2-OXOBUTANOATE HYDROXYMETHYLTRANSFERASE"/>
    <property type="match status" value="1"/>
</dbReference>
<dbReference type="PANTHER" id="PTHR20881:SF0">
    <property type="entry name" value="3-METHYL-2-OXOBUTANOATE HYDROXYMETHYLTRANSFERASE"/>
    <property type="match status" value="1"/>
</dbReference>
<dbReference type="Pfam" id="PF02548">
    <property type="entry name" value="Pantoate_transf"/>
    <property type="match status" value="1"/>
</dbReference>
<dbReference type="PIRSF" id="PIRSF000388">
    <property type="entry name" value="Pantoate_hydroxy_MeTrfase"/>
    <property type="match status" value="1"/>
</dbReference>
<dbReference type="SUPFAM" id="SSF51621">
    <property type="entry name" value="Phosphoenolpyruvate/pyruvate domain"/>
    <property type="match status" value="1"/>
</dbReference>
<sequence>MITVNTLQKMKAAGEKIVMLTAYESSFAALMDDAGVDVLLVGDSLGMAVQGRQSTLPVSLRDMCYHTECVARGAKNAMIVSDLPFGAYQQSKEQAFAAAAELMAAGAHMVKLEGGVWMAETTEFLQMRGIPVCAHIGLTPQSVFAFGGYKVQGRGGKAQALLNDAKAHDEAGAAVVLMECVPAELAKKVTETVSCPTIGIGAGADCDGQVLVMHDMLGIFPGKTAKFVKNFMRGQSSIQAAVRAYVAEVKAKTFPAAEHIFAD</sequence>
<comment type="function">
    <text evidence="1">Catalyzes the reversible reaction in which hydroxymethyl group from 5,10-methylenetetrahydrofolate is transferred onto alpha-ketoisovalerate to form ketopantoate.</text>
</comment>
<comment type="catalytic activity">
    <reaction evidence="1">
        <text>3-methyl-2-oxobutanoate + (6R)-5,10-methylene-5,6,7,8-tetrahydrofolate + H2O = 2-dehydropantoate + (6S)-5,6,7,8-tetrahydrofolate</text>
        <dbReference type="Rhea" id="RHEA:11824"/>
        <dbReference type="ChEBI" id="CHEBI:11561"/>
        <dbReference type="ChEBI" id="CHEBI:11851"/>
        <dbReference type="ChEBI" id="CHEBI:15377"/>
        <dbReference type="ChEBI" id="CHEBI:15636"/>
        <dbReference type="ChEBI" id="CHEBI:57453"/>
        <dbReference type="EC" id="2.1.2.11"/>
    </reaction>
</comment>
<comment type="cofactor">
    <cofactor evidence="1">
        <name>Mg(2+)</name>
        <dbReference type="ChEBI" id="CHEBI:18420"/>
    </cofactor>
    <text evidence="1">Binds 1 Mg(2+) ion per subunit.</text>
</comment>
<comment type="pathway">
    <text evidence="1">Cofactor biosynthesis; (R)-pantothenate biosynthesis; (R)-pantoate from 3-methyl-2-oxobutanoate: step 1/2.</text>
</comment>
<comment type="subunit">
    <text evidence="1">Homodecamer; pentamer of dimers.</text>
</comment>
<comment type="subcellular location">
    <subcellularLocation>
        <location evidence="1">Cytoplasm</location>
    </subcellularLocation>
</comment>
<comment type="similarity">
    <text evidence="1">Belongs to the PanB family.</text>
</comment>
<keyword id="KW-0963">Cytoplasm</keyword>
<keyword id="KW-0460">Magnesium</keyword>
<keyword id="KW-0479">Metal-binding</keyword>
<keyword id="KW-0566">Pantothenate biosynthesis</keyword>
<keyword id="KW-1185">Reference proteome</keyword>
<keyword id="KW-0808">Transferase</keyword>
<protein>
    <recommendedName>
        <fullName evidence="1">3-methyl-2-oxobutanoate hydroxymethyltransferase</fullName>
        <ecNumber evidence="1">2.1.2.11</ecNumber>
    </recommendedName>
    <alternativeName>
        <fullName evidence="1">Ketopantoate hydroxymethyltransferase</fullName>
        <shortName evidence="1">KPHMT</shortName>
    </alternativeName>
</protein>
<accession>Q5F9F9</accession>
<proteinExistence type="inferred from homology"/>
<organism>
    <name type="scientific">Neisseria gonorrhoeae (strain ATCC 700825 / FA 1090)</name>
    <dbReference type="NCBI Taxonomy" id="242231"/>
    <lineage>
        <taxon>Bacteria</taxon>
        <taxon>Pseudomonadati</taxon>
        <taxon>Pseudomonadota</taxon>
        <taxon>Betaproteobacteria</taxon>
        <taxon>Neisseriales</taxon>
        <taxon>Neisseriaceae</taxon>
        <taxon>Neisseria</taxon>
    </lineage>
</organism>
<reference key="1">
    <citation type="submission" date="2003-03" db="EMBL/GenBank/DDBJ databases">
        <title>The complete genome sequence of Neisseria gonorrhoeae.</title>
        <authorList>
            <person name="Lewis L.A."/>
            <person name="Gillaspy A.F."/>
            <person name="McLaughlin R.E."/>
            <person name="Gipson M."/>
            <person name="Ducey T.F."/>
            <person name="Ownbey T."/>
            <person name="Hartman K."/>
            <person name="Nydick C."/>
            <person name="Carson M.B."/>
            <person name="Vaughn J."/>
            <person name="Thomson C."/>
            <person name="Song L."/>
            <person name="Lin S."/>
            <person name="Yuan X."/>
            <person name="Najar F."/>
            <person name="Zhan M."/>
            <person name="Ren Q."/>
            <person name="Zhu H."/>
            <person name="Qi S."/>
            <person name="Kenton S.M."/>
            <person name="Lai H."/>
            <person name="White J.D."/>
            <person name="Clifton S."/>
            <person name="Roe B.A."/>
            <person name="Dyer D.W."/>
        </authorList>
    </citation>
    <scope>NUCLEOTIDE SEQUENCE [LARGE SCALE GENOMIC DNA]</scope>
    <source>
        <strain>ATCC 700825 / FA 1090</strain>
    </source>
</reference>